<keyword id="KW-0963">Cytoplasm</keyword>
<keyword id="KW-0378">Hydrolase</keyword>
<keyword id="KW-0694">RNA-binding</keyword>
<keyword id="KW-0820">tRNA-binding</keyword>
<organism>
    <name type="scientific">Wolbachia pipientis wMel</name>
    <dbReference type="NCBI Taxonomy" id="163164"/>
    <lineage>
        <taxon>Bacteria</taxon>
        <taxon>Pseudomonadati</taxon>
        <taxon>Pseudomonadota</taxon>
        <taxon>Alphaproteobacteria</taxon>
        <taxon>Rickettsiales</taxon>
        <taxon>Anaplasmataceae</taxon>
        <taxon>Wolbachieae</taxon>
        <taxon>Wolbachia</taxon>
    </lineage>
</organism>
<name>PTH_WOLPM</name>
<comment type="function">
    <text evidence="1">Hydrolyzes ribosome-free peptidyl-tRNAs (with 1 or more amino acids incorporated), which drop off the ribosome during protein synthesis, or as a result of ribosome stalling.</text>
</comment>
<comment type="function">
    <text evidence="1">Catalyzes the release of premature peptidyl moieties from peptidyl-tRNA molecules trapped in stalled 50S ribosomal subunits, and thus maintains levels of free tRNAs and 50S ribosomes.</text>
</comment>
<comment type="catalytic activity">
    <reaction evidence="1">
        <text>an N-acyl-L-alpha-aminoacyl-tRNA + H2O = an N-acyl-L-amino acid + a tRNA + H(+)</text>
        <dbReference type="Rhea" id="RHEA:54448"/>
        <dbReference type="Rhea" id="RHEA-COMP:10123"/>
        <dbReference type="Rhea" id="RHEA-COMP:13883"/>
        <dbReference type="ChEBI" id="CHEBI:15377"/>
        <dbReference type="ChEBI" id="CHEBI:15378"/>
        <dbReference type="ChEBI" id="CHEBI:59874"/>
        <dbReference type="ChEBI" id="CHEBI:78442"/>
        <dbReference type="ChEBI" id="CHEBI:138191"/>
        <dbReference type="EC" id="3.1.1.29"/>
    </reaction>
</comment>
<comment type="subunit">
    <text evidence="1">Monomer.</text>
</comment>
<comment type="subcellular location">
    <subcellularLocation>
        <location evidence="1">Cytoplasm</location>
    </subcellularLocation>
</comment>
<comment type="similarity">
    <text evidence="1">Belongs to the PTH family.</text>
</comment>
<gene>
    <name evidence="1" type="primary">pth</name>
    <name type="ordered locus">WD_0175</name>
</gene>
<proteinExistence type="inferred from homology"/>
<dbReference type="EC" id="3.1.1.29" evidence="1"/>
<dbReference type="EMBL" id="AE017196">
    <property type="protein sequence ID" value="AAS13924.1"/>
    <property type="molecule type" value="Genomic_DNA"/>
</dbReference>
<dbReference type="RefSeq" id="WP_010962413.1">
    <property type="nucleotide sequence ID" value="NZ_OX384529.1"/>
</dbReference>
<dbReference type="SMR" id="Q73II8"/>
<dbReference type="EnsemblBacteria" id="AAS13924">
    <property type="protein sequence ID" value="AAS13924"/>
    <property type="gene ID" value="WD_0175"/>
</dbReference>
<dbReference type="GeneID" id="70035664"/>
<dbReference type="KEGG" id="wol:WD_0175"/>
<dbReference type="eggNOG" id="COG0193">
    <property type="taxonomic scope" value="Bacteria"/>
</dbReference>
<dbReference type="Proteomes" id="UP000008215">
    <property type="component" value="Chromosome"/>
</dbReference>
<dbReference type="GO" id="GO:0005737">
    <property type="term" value="C:cytoplasm"/>
    <property type="evidence" value="ECO:0007669"/>
    <property type="project" value="UniProtKB-SubCell"/>
</dbReference>
<dbReference type="GO" id="GO:0004045">
    <property type="term" value="F:peptidyl-tRNA hydrolase activity"/>
    <property type="evidence" value="ECO:0007669"/>
    <property type="project" value="UniProtKB-UniRule"/>
</dbReference>
<dbReference type="GO" id="GO:0000049">
    <property type="term" value="F:tRNA binding"/>
    <property type="evidence" value="ECO:0007669"/>
    <property type="project" value="UniProtKB-UniRule"/>
</dbReference>
<dbReference type="GO" id="GO:0006515">
    <property type="term" value="P:protein quality control for misfolded or incompletely synthesized proteins"/>
    <property type="evidence" value="ECO:0007669"/>
    <property type="project" value="UniProtKB-UniRule"/>
</dbReference>
<dbReference type="GO" id="GO:0072344">
    <property type="term" value="P:rescue of stalled ribosome"/>
    <property type="evidence" value="ECO:0007669"/>
    <property type="project" value="UniProtKB-UniRule"/>
</dbReference>
<dbReference type="CDD" id="cd00462">
    <property type="entry name" value="PTH"/>
    <property type="match status" value="1"/>
</dbReference>
<dbReference type="FunFam" id="3.40.50.1470:FF:000001">
    <property type="entry name" value="Peptidyl-tRNA hydrolase"/>
    <property type="match status" value="1"/>
</dbReference>
<dbReference type="Gene3D" id="3.40.50.1470">
    <property type="entry name" value="Peptidyl-tRNA hydrolase"/>
    <property type="match status" value="1"/>
</dbReference>
<dbReference type="HAMAP" id="MF_00083">
    <property type="entry name" value="Pept_tRNA_hydro_bact"/>
    <property type="match status" value="1"/>
</dbReference>
<dbReference type="InterPro" id="IPR001328">
    <property type="entry name" value="Pept_tRNA_hydro"/>
</dbReference>
<dbReference type="InterPro" id="IPR018171">
    <property type="entry name" value="Pept_tRNA_hydro_CS"/>
</dbReference>
<dbReference type="InterPro" id="IPR036416">
    <property type="entry name" value="Pept_tRNA_hydro_sf"/>
</dbReference>
<dbReference type="NCBIfam" id="TIGR00447">
    <property type="entry name" value="pth"/>
    <property type="match status" value="1"/>
</dbReference>
<dbReference type="PANTHER" id="PTHR17224">
    <property type="entry name" value="PEPTIDYL-TRNA HYDROLASE"/>
    <property type="match status" value="1"/>
</dbReference>
<dbReference type="PANTHER" id="PTHR17224:SF1">
    <property type="entry name" value="PEPTIDYL-TRNA HYDROLASE"/>
    <property type="match status" value="1"/>
</dbReference>
<dbReference type="Pfam" id="PF01195">
    <property type="entry name" value="Pept_tRNA_hydro"/>
    <property type="match status" value="1"/>
</dbReference>
<dbReference type="SUPFAM" id="SSF53178">
    <property type="entry name" value="Peptidyl-tRNA hydrolase-like"/>
    <property type="match status" value="1"/>
</dbReference>
<dbReference type="PROSITE" id="PS01196">
    <property type="entry name" value="PEPT_TRNA_HYDROL_2"/>
    <property type="match status" value="1"/>
</dbReference>
<accession>Q73II8</accession>
<protein>
    <recommendedName>
        <fullName evidence="1">Peptidyl-tRNA hydrolase</fullName>
        <shortName evidence="1">Pth</shortName>
        <ecNumber evidence="1">3.1.1.29</ecNumber>
    </recommendedName>
</protein>
<evidence type="ECO:0000255" key="1">
    <source>
        <dbReference type="HAMAP-Rule" id="MF_00083"/>
    </source>
</evidence>
<sequence>MHLIVGLGNPGSQYELTHHNIGFIVVDTICKYWNFHSFSKKADYLITSGIINDNKIMLIKPYSFMNNSGIPVAKIQNFYKLSLDNIVVIHDDADLELGRIKVKKGGSSAGHNGLKSIDSFIGNDYWRLRFGVGRPEDQRSLADYVLSKFSNFYNVTPLVEKIAKNIHLMLQGDNTAFINLIV</sequence>
<feature type="chain" id="PRO_0000187855" description="Peptidyl-tRNA hydrolase">
    <location>
        <begin position="1"/>
        <end position="182"/>
    </location>
</feature>
<feature type="active site" description="Proton acceptor" evidence="1">
    <location>
        <position position="19"/>
    </location>
</feature>
<feature type="binding site" evidence="1">
    <location>
        <position position="14"/>
    </location>
    <ligand>
        <name>tRNA</name>
        <dbReference type="ChEBI" id="CHEBI:17843"/>
    </ligand>
</feature>
<feature type="binding site" evidence="1">
    <location>
        <position position="64"/>
    </location>
    <ligand>
        <name>tRNA</name>
        <dbReference type="ChEBI" id="CHEBI:17843"/>
    </ligand>
</feature>
<feature type="binding site" evidence="1">
    <location>
        <position position="66"/>
    </location>
    <ligand>
        <name>tRNA</name>
        <dbReference type="ChEBI" id="CHEBI:17843"/>
    </ligand>
</feature>
<feature type="binding site" evidence="1">
    <location>
        <position position="112"/>
    </location>
    <ligand>
        <name>tRNA</name>
        <dbReference type="ChEBI" id="CHEBI:17843"/>
    </ligand>
</feature>
<feature type="site" description="Discriminates between blocked and unblocked aminoacyl-tRNA" evidence="1">
    <location>
        <position position="9"/>
    </location>
</feature>
<feature type="site" description="Stabilizes the basic form of H active site to accept a proton" evidence="1">
    <location>
        <position position="91"/>
    </location>
</feature>
<reference key="1">
    <citation type="journal article" date="2004" name="PLoS Biol.">
        <title>Phylogenomics of the reproductive parasite Wolbachia pipientis wMel: a streamlined genome overrun by mobile genetic elements.</title>
        <authorList>
            <person name="Wu M."/>
            <person name="Sun L.V."/>
            <person name="Vamathevan J.J."/>
            <person name="Riegler M."/>
            <person name="DeBoy R.T."/>
            <person name="Brownlie J.C."/>
            <person name="McGraw E.A."/>
            <person name="Martin W."/>
            <person name="Esser C."/>
            <person name="Ahmadinejad N."/>
            <person name="Wiegand C."/>
            <person name="Madupu R."/>
            <person name="Beanan M.J."/>
            <person name="Brinkac L.M."/>
            <person name="Daugherty S.C."/>
            <person name="Durkin A.S."/>
            <person name="Kolonay J.F."/>
            <person name="Nelson W.C."/>
            <person name="Mohamoud Y."/>
            <person name="Lee P."/>
            <person name="Berry K.J."/>
            <person name="Young M.B."/>
            <person name="Utterback T.R."/>
            <person name="Weidman J.F."/>
            <person name="Nierman W.C."/>
            <person name="Paulsen I.T."/>
            <person name="Nelson K.E."/>
            <person name="Tettelin H."/>
            <person name="O'Neill S.L."/>
            <person name="Eisen J.A."/>
        </authorList>
    </citation>
    <scope>NUCLEOTIDE SEQUENCE [LARGE SCALE GENOMIC DNA]</scope>
</reference>